<evidence type="ECO:0000255" key="1">
    <source>
        <dbReference type="HAMAP-Rule" id="MF_00421"/>
    </source>
</evidence>
<gene>
    <name evidence="1" type="primary">purQ</name>
    <name type="ordered locus">MM_2807</name>
</gene>
<keyword id="KW-0067">ATP-binding</keyword>
<keyword id="KW-0963">Cytoplasm</keyword>
<keyword id="KW-0315">Glutamine amidotransferase</keyword>
<keyword id="KW-0378">Hydrolase</keyword>
<keyword id="KW-0436">Ligase</keyword>
<keyword id="KW-0547">Nucleotide-binding</keyword>
<keyword id="KW-0658">Purine biosynthesis</keyword>
<organism>
    <name type="scientific">Methanosarcina mazei (strain ATCC BAA-159 / DSM 3647 / Goe1 / Go1 / JCM 11833 / OCM 88)</name>
    <name type="common">Methanosarcina frisia</name>
    <dbReference type="NCBI Taxonomy" id="192952"/>
    <lineage>
        <taxon>Archaea</taxon>
        <taxon>Methanobacteriati</taxon>
        <taxon>Methanobacteriota</taxon>
        <taxon>Stenosarchaea group</taxon>
        <taxon>Methanomicrobia</taxon>
        <taxon>Methanosarcinales</taxon>
        <taxon>Methanosarcinaceae</taxon>
        <taxon>Methanosarcina</taxon>
    </lineage>
</organism>
<comment type="function">
    <text evidence="1">Part of the phosphoribosylformylglycinamidine synthase complex involved in the purines biosynthetic pathway. Catalyzes the ATP-dependent conversion of formylglycinamide ribonucleotide (FGAR) and glutamine to yield formylglycinamidine ribonucleotide (FGAM) and glutamate. The FGAM synthase complex is composed of three subunits. PurQ produces an ammonia molecule by converting glutamine to glutamate. PurL transfers the ammonia molecule to FGAR to form FGAM in an ATP-dependent manner. PurS interacts with PurQ and PurL and is thought to assist in the transfer of the ammonia molecule from PurQ to PurL.</text>
</comment>
<comment type="catalytic activity">
    <reaction evidence="1">
        <text>N(2)-formyl-N(1)-(5-phospho-beta-D-ribosyl)glycinamide + L-glutamine + ATP + H2O = 2-formamido-N(1)-(5-O-phospho-beta-D-ribosyl)acetamidine + L-glutamate + ADP + phosphate + H(+)</text>
        <dbReference type="Rhea" id="RHEA:17129"/>
        <dbReference type="ChEBI" id="CHEBI:15377"/>
        <dbReference type="ChEBI" id="CHEBI:15378"/>
        <dbReference type="ChEBI" id="CHEBI:29985"/>
        <dbReference type="ChEBI" id="CHEBI:30616"/>
        <dbReference type="ChEBI" id="CHEBI:43474"/>
        <dbReference type="ChEBI" id="CHEBI:58359"/>
        <dbReference type="ChEBI" id="CHEBI:147286"/>
        <dbReference type="ChEBI" id="CHEBI:147287"/>
        <dbReference type="ChEBI" id="CHEBI:456216"/>
        <dbReference type="EC" id="6.3.5.3"/>
    </reaction>
</comment>
<comment type="catalytic activity">
    <reaction evidence="1">
        <text>L-glutamine + H2O = L-glutamate + NH4(+)</text>
        <dbReference type="Rhea" id="RHEA:15889"/>
        <dbReference type="ChEBI" id="CHEBI:15377"/>
        <dbReference type="ChEBI" id="CHEBI:28938"/>
        <dbReference type="ChEBI" id="CHEBI:29985"/>
        <dbReference type="ChEBI" id="CHEBI:58359"/>
        <dbReference type="EC" id="3.5.1.2"/>
    </reaction>
</comment>
<comment type="pathway">
    <text evidence="1">Purine metabolism; IMP biosynthesis via de novo pathway; 5-amino-1-(5-phospho-D-ribosyl)imidazole from N(2)-formyl-N(1)-(5-phospho-D-ribosyl)glycinamide: step 1/2.</text>
</comment>
<comment type="subunit">
    <text evidence="1">Part of the FGAM synthase complex composed of 1 PurL, 1 PurQ and 2 PurS subunits.</text>
</comment>
<comment type="subcellular location">
    <subcellularLocation>
        <location evidence="1">Cytoplasm</location>
    </subcellularLocation>
</comment>
<dbReference type="EC" id="6.3.5.3" evidence="1"/>
<dbReference type="EC" id="3.5.1.2" evidence="1"/>
<dbReference type="EMBL" id="AE008384">
    <property type="protein sequence ID" value="AAM32503.1"/>
    <property type="molecule type" value="Genomic_DNA"/>
</dbReference>
<dbReference type="RefSeq" id="WP_011034715.1">
    <property type="nucleotide sequence ID" value="NC_003901.1"/>
</dbReference>
<dbReference type="SMR" id="Q8PTB0"/>
<dbReference type="GeneID" id="82161894"/>
<dbReference type="KEGG" id="mma:MM_2807"/>
<dbReference type="PATRIC" id="fig|192952.21.peg.3241"/>
<dbReference type="eggNOG" id="arCOG00102">
    <property type="taxonomic scope" value="Archaea"/>
</dbReference>
<dbReference type="HOGENOM" id="CLU_001031_3_1_2"/>
<dbReference type="UniPathway" id="UPA00074">
    <property type="reaction ID" value="UER00128"/>
</dbReference>
<dbReference type="Proteomes" id="UP000000595">
    <property type="component" value="Chromosome"/>
</dbReference>
<dbReference type="GO" id="GO:0005737">
    <property type="term" value="C:cytoplasm"/>
    <property type="evidence" value="ECO:0007669"/>
    <property type="project" value="UniProtKB-SubCell"/>
</dbReference>
<dbReference type="GO" id="GO:0005524">
    <property type="term" value="F:ATP binding"/>
    <property type="evidence" value="ECO:0007669"/>
    <property type="project" value="UniProtKB-KW"/>
</dbReference>
<dbReference type="GO" id="GO:0004359">
    <property type="term" value="F:glutaminase activity"/>
    <property type="evidence" value="ECO:0007669"/>
    <property type="project" value="UniProtKB-EC"/>
</dbReference>
<dbReference type="GO" id="GO:0004642">
    <property type="term" value="F:phosphoribosylformylglycinamidine synthase activity"/>
    <property type="evidence" value="ECO:0007669"/>
    <property type="project" value="UniProtKB-UniRule"/>
</dbReference>
<dbReference type="GO" id="GO:0006189">
    <property type="term" value="P:'de novo' IMP biosynthetic process"/>
    <property type="evidence" value="ECO:0007669"/>
    <property type="project" value="UniProtKB-UniRule"/>
</dbReference>
<dbReference type="CDD" id="cd01740">
    <property type="entry name" value="GATase1_FGAR_AT"/>
    <property type="match status" value="1"/>
</dbReference>
<dbReference type="Gene3D" id="3.40.50.880">
    <property type="match status" value="1"/>
</dbReference>
<dbReference type="HAMAP" id="MF_00421">
    <property type="entry name" value="PurQ"/>
    <property type="match status" value="1"/>
</dbReference>
<dbReference type="InterPro" id="IPR029062">
    <property type="entry name" value="Class_I_gatase-like"/>
</dbReference>
<dbReference type="InterPro" id="IPR010075">
    <property type="entry name" value="PRibForGlyAmidine_synth_PurQ"/>
</dbReference>
<dbReference type="NCBIfam" id="TIGR01737">
    <property type="entry name" value="FGAM_synth_I"/>
    <property type="match status" value="1"/>
</dbReference>
<dbReference type="NCBIfam" id="NF002957">
    <property type="entry name" value="PRK03619.1"/>
    <property type="match status" value="1"/>
</dbReference>
<dbReference type="PANTHER" id="PTHR47552">
    <property type="entry name" value="PHOSPHORIBOSYLFORMYLGLYCINAMIDINE SYNTHASE SUBUNIT PURQ"/>
    <property type="match status" value="1"/>
</dbReference>
<dbReference type="PANTHER" id="PTHR47552:SF1">
    <property type="entry name" value="PHOSPHORIBOSYLFORMYLGLYCINAMIDINE SYNTHASE SUBUNIT PURQ"/>
    <property type="match status" value="1"/>
</dbReference>
<dbReference type="Pfam" id="PF13507">
    <property type="entry name" value="GATase_5"/>
    <property type="match status" value="1"/>
</dbReference>
<dbReference type="PIRSF" id="PIRSF001586">
    <property type="entry name" value="FGAM_synth_I"/>
    <property type="match status" value="1"/>
</dbReference>
<dbReference type="SMART" id="SM01211">
    <property type="entry name" value="GATase_5"/>
    <property type="match status" value="1"/>
</dbReference>
<dbReference type="SUPFAM" id="SSF52317">
    <property type="entry name" value="Class I glutamine amidotransferase-like"/>
    <property type="match status" value="1"/>
</dbReference>
<dbReference type="PROSITE" id="PS51273">
    <property type="entry name" value="GATASE_TYPE_1"/>
    <property type="match status" value="1"/>
</dbReference>
<name>PURQ_METMA</name>
<sequence>MKIAIIQFGGTNCDMDVLHVLKDVVGVDAETVWYKEESLTGFDGVVVPGGFSYGDYLRAGAIAARTPIMDSIKKIASEGKPVLGICNGFQILTEARLLEGALTTNEYPKFRCHWTNLRVETANTPFTSKFRKGEVIKLPIAHMEGKFYAEEATLAELDENEQVVFRYVDEKGRLTDKANPNGSLENIAGIVNSSRNVLGLMPHPERASESILGSDEGRKVFESMADYITENF</sequence>
<accession>Q8PTB0</accession>
<protein>
    <recommendedName>
        <fullName evidence="1">Phosphoribosylformylglycinamidine synthase subunit PurQ</fullName>
        <shortName evidence="1">FGAM synthase</shortName>
        <ecNumber evidence="1">6.3.5.3</ecNumber>
    </recommendedName>
    <alternativeName>
        <fullName evidence="1">Formylglycinamide ribonucleotide amidotransferase subunit I</fullName>
        <shortName evidence="1">FGAR amidotransferase I</shortName>
        <shortName evidence="1">FGAR-AT I</shortName>
    </alternativeName>
    <alternativeName>
        <fullName evidence="1">Glutaminase PurQ</fullName>
        <ecNumber evidence="1">3.5.1.2</ecNumber>
    </alternativeName>
    <alternativeName>
        <fullName evidence="1">Phosphoribosylformylglycinamidine synthase subunit I</fullName>
    </alternativeName>
</protein>
<reference key="1">
    <citation type="journal article" date="2002" name="J. Mol. Microbiol. Biotechnol.">
        <title>The genome of Methanosarcina mazei: evidence for lateral gene transfer between Bacteria and Archaea.</title>
        <authorList>
            <person name="Deppenmeier U."/>
            <person name="Johann A."/>
            <person name="Hartsch T."/>
            <person name="Merkl R."/>
            <person name="Schmitz R.A."/>
            <person name="Martinez-Arias R."/>
            <person name="Henne A."/>
            <person name="Wiezer A."/>
            <person name="Baeumer S."/>
            <person name="Jacobi C."/>
            <person name="Brueggemann H."/>
            <person name="Lienard T."/>
            <person name="Christmann A."/>
            <person name="Boemecke M."/>
            <person name="Steckel S."/>
            <person name="Bhattacharyya A."/>
            <person name="Lykidis A."/>
            <person name="Overbeek R."/>
            <person name="Klenk H.-P."/>
            <person name="Gunsalus R.P."/>
            <person name="Fritz H.-J."/>
            <person name="Gottschalk G."/>
        </authorList>
    </citation>
    <scope>NUCLEOTIDE SEQUENCE [LARGE SCALE GENOMIC DNA]</scope>
    <source>
        <strain>ATCC BAA-159 / DSM 3647 / Goe1 / Go1 / JCM 11833 / OCM 88</strain>
    </source>
</reference>
<feature type="chain" id="PRO_0000100609" description="Phosphoribosylformylglycinamidine synthase subunit PurQ">
    <location>
        <begin position="1"/>
        <end position="232"/>
    </location>
</feature>
<feature type="domain" description="Glutamine amidotransferase type-1" evidence="1">
    <location>
        <begin position="2"/>
        <end position="232"/>
    </location>
</feature>
<feature type="active site" description="Nucleophile" evidence="1">
    <location>
        <position position="86"/>
    </location>
</feature>
<feature type="active site" evidence="1">
    <location>
        <position position="203"/>
    </location>
</feature>
<feature type="active site" evidence="1">
    <location>
        <position position="205"/>
    </location>
</feature>
<proteinExistence type="inferred from homology"/>